<sequence>MNFETIIGLEVHAELNTNSKIFSPSSAHFGEDPNANTNVIDWSFPGVLPVMNKGVIDASIKAALALNMDIHKEMHFDRKNYFYPDNPKAYQISQFDEPVGYNGWIEIKLEDGSTKKIRIERAHLEEDAGKNTHGTDGYSYVDLNRQGVPLIEIVSEADMRSPEEAYAYLTALKEIIQYTGISDVKMEEGSMRVDANISLRPYGQEQFGTKTELKNLNSFSNVRKGLEFEVERQAKLLRSGGVIRQETRRYDEANKGTILMRVKEGAADYRYFPEPDLPLYEIDDAWIDEMRAQLPQFPAQRRAKYEEELGLSAYDASQLTATKVLSDFFETAVSLGGDAKQVSNWLQGEIAQFLNAEGKTIEEIALTPENLVEMIAIIADGTISSKMAKKVFVHLAKNGGSARAYVEKAGLVQISDPAVLVPIIHQVFADNEAAVADFKSGKRNADKAFTGFLMKATKGQANPQVAQQLLAQELQKLRD</sequence>
<gene>
    <name evidence="1" type="primary">gatB</name>
    <name type="ordered locus">M6_Spy1500</name>
</gene>
<name>GATB_STRP6</name>
<proteinExistence type="inferred from homology"/>
<protein>
    <recommendedName>
        <fullName evidence="1">Aspartyl/glutamyl-tRNA(Asn/Gln) amidotransferase subunit B</fullName>
        <shortName evidence="1">Asp/Glu-ADT subunit B</shortName>
        <ecNumber evidence="1">6.3.5.-</ecNumber>
    </recommendedName>
</protein>
<keyword id="KW-0067">ATP-binding</keyword>
<keyword id="KW-0436">Ligase</keyword>
<keyword id="KW-0547">Nucleotide-binding</keyword>
<keyword id="KW-0648">Protein biosynthesis</keyword>
<dbReference type="EC" id="6.3.5.-" evidence="1"/>
<dbReference type="EMBL" id="CP000003">
    <property type="protein sequence ID" value="AAT87635.1"/>
    <property type="molecule type" value="Genomic_DNA"/>
</dbReference>
<dbReference type="RefSeq" id="WP_011184879.1">
    <property type="nucleotide sequence ID" value="NC_006086.1"/>
</dbReference>
<dbReference type="SMR" id="Q5XAC8"/>
<dbReference type="KEGG" id="spa:M6_Spy1500"/>
<dbReference type="HOGENOM" id="CLU_019240_0_0_9"/>
<dbReference type="Proteomes" id="UP000001167">
    <property type="component" value="Chromosome"/>
</dbReference>
<dbReference type="GO" id="GO:0050566">
    <property type="term" value="F:asparaginyl-tRNA synthase (glutamine-hydrolyzing) activity"/>
    <property type="evidence" value="ECO:0007669"/>
    <property type="project" value="RHEA"/>
</dbReference>
<dbReference type="GO" id="GO:0005524">
    <property type="term" value="F:ATP binding"/>
    <property type="evidence" value="ECO:0007669"/>
    <property type="project" value="UniProtKB-KW"/>
</dbReference>
<dbReference type="GO" id="GO:0050567">
    <property type="term" value="F:glutaminyl-tRNA synthase (glutamine-hydrolyzing) activity"/>
    <property type="evidence" value="ECO:0007669"/>
    <property type="project" value="UniProtKB-UniRule"/>
</dbReference>
<dbReference type="GO" id="GO:0070681">
    <property type="term" value="P:glutaminyl-tRNAGln biosynthesis via transamidation"/>
    <property type="evidence" value="ECO:0007669"/>
    <property type="project" value="TreeGrafter"/>
</dbReference>
<dbReference type="GO" id="GO:0006412">
    <property type="term" value="P:translation"/>
    <property type="evidence" value="ECO:0007669"/>
    <property type="project" value="UniProtKB-UniRule"/>
</dbReference>
<dbReference type="FunFam" id="1.10.10.410:FF:000001">
    <property type="entry name" value="Aspartyl/glutamyl-tRNA(Asn/Gln) amidotransferase subunit B"/>
    <property type="match status" value="1"/>
</dbReference>
<dbReference type="FunFam" id="1.10.150.380:FF:000001">
    <property type="entry name" value="Aspartyl/glutamyl-tRNA(Asn/Gln) amidotransferase subunit B"/>
    <property type="match status" value="1"/>
</dbReference>
<dbReference type="Gene3D" id="1.10.10.410">
    <property type="match status" value="1"/>
</dbReference>
<dbReference type="Gene3D" id="1.10.150.380">
    <property type="entry name" value="GatB domain, N-terminal subdomain"/>
    <property type="match status" value="1"/>
</dbReference>
<dbReference type="HAMAP" id="MF_00121">
    <property type="entry name" value="GatB"/>
    <property type="match status" value="1"/>
</dbReference>
<dbReference type="InterPro" id="IPR017959">
    <property type="entry name" value="Asn/Gln-tRNA_amidoTrfase_suB/E"/>
</dbReference>
<dbReference type="InterPro" id="IPR006075">
    <property type="entry name" value="Asn/Gln-tRNA_Trfase_suB/E_cat"/>
</dbReference>
<dbReference type="InterPro" id="IPR018027">
    <property type="entry name" value="Asn/Gln_amidotransferase"/>
</dbReference>
<dbReference type="InterPro" id="IPR003789">
    <property type="entry name" value="Asn/Gln_tRNA_amidoTrase-B-like"/>
</dbReference>
<dbReference type="InterPro" id="IPR004413">
    <property type="entry name" value="GatB"/>
</dbReference>
<dbReference type="InterPro" id="IPR042114">
    <property type="entry name" value="GatB_C_1"/>
</dbReference>
<dbReference type="InterPro" id="IPR023168">
    <property type="entry name" value="GatB_Yqey_C_2"/>
</dbReference>
<dbReference type="InterPro" id="IPR017958">
    <property type="entry name" value="Gln-tRNA_amidoTrfase_suB_CS"/>
</dbReference>
<dbReference type="InterPro" id="IPR014746">
    <property type="entry name" value="Gln_synth/guanido_kin_cat_dom"/>
</dbReference>
<dbReference type="NCBIfam" id="TIGR00133">
    <property type="entry name" value="gatB"/>
    <property type="match status" value="1"/>
</dbReference>
<dbReference type="NCBIfam" id="NF004011">
    <property type="entry name" value="PRK05477.1-1"/>
    <property type="match status" value="1"/>
</dbReference>
<dbReference type="NCBIfam" id="NF004012">
    <property type="entry name" value="PRK05477.1-2"/>
    <property type="match status" value="1"/>
</dbReference>
<dbReference type="NCBIfam" id="NF004014">
    <property type="entry name" value="PRK05477.1-4"/>
    <property type="match status" value="1"/>
</dbReference>
<dbReference type="PANTHER" id="PTHR11659">
    <property type="entry name" value="GLUTAMYL-TRNA GLN AMIDOTRANSFERASE SUBUNIT B MITOCHONDRIAL AND PROKARYOTIC PET112-RELATED"/>
    <property type="match status" value="1"/>
</dbReference>
<dbReference type="PANTHER" id="PTHR11659:SF0">
    <property type="entry name" value="GLUTAMYL-TRNA(GLN) AMIDOTRANSFERASE SUBUNIT B, MITOCHONDRIAL"/>
    <property type="match status" value="1"/>
</dbReference>
<dbReference type="Pfam" id="PF02934">
    <property type="entry name" value="GatB_N"/>
    <property type="match status" value="1"/>
</dbReference>
<dbReference type="Pfam" id="PF02637">
    <property type="entry name" value="GatB_Yqey"/>
    <property type="match status" value="1"/>
</dbReference>
<dbReference type="SMART" id="SM00845">
    <property type="entry name" value="GatB_Yqey"/>
    <property type="match status" value="1"/>
</dbReference>
<dbReference type="SUPFAM" id="SSF89095">
    <property type="entry name" value="GatB/YqeY motif"/>
    <property type="match status" value="1"/>
</dbReference>
<dbReference type="SUPFAM" id="SSF55931">
    <property type="entry name" value="Glutamine synthetase/guanido kinase"/>
    <property type="match status" value="1"/>
</dbReference>
<dbReference type="PROSITE" id="PS01234">
    <property type="entry name" value="GATB"/>
    <property type="match status" value="1"/>
</dbReference>
<reference key="1">
    <citation type="journal article" date="2004" name="J. Infect. Dis.">
        <title>Progress toward characterization of the group A Streptococcus metagenome: complete genome sequence of a macrolide-resistant serotype M6 strain.</title>
        <authorList>
            <person name="Banks D.J."/>
            <person name="Porcella S.F."/>
            <person name="Barbian K.D."/>
            <person name="Beres S.B."/>
            <person name="Philips L.E."/>
            <person name="Voyich J.M."/>
            <person name="DeLeo F.R."/>
            <person name="Martin J.M."/>
            <person name="Somerville G.A."/>
            <person name="Musser J.M."/>
        </authorList>
    </citation>
    <scope>NUCLEOTIDE SEQUENCE [LARGE SCALE GENOMIC DNA]</scope>
    <source>
        <strain>ATCC BAA-946 / MGAS10394</strain>
    </source>
</reference>
<organism>
    <name type="scientific">Streptococcus pyogenes serotype M6 (strain ATCC BAA-946 / MGAS10394)</name>
    <dbReference type="NCBI Taxonomy" id="286636"/>
    <lineage>
        <taxon>Bacteria</taxon>
        <taxon>Bacillati</taxon>
        <taxon>Bacillota</taxon>
        <taxon>Bacilli</taxon>
        <taxon>Lactobacillales</taxon>
        <taxon>Streptococcaceae</taxon>
        <taxon>Streptococcus</taxon>
    </lineage>
</organism>
<feature type="chain" id="PRO_0000148852" description="Aspartyl/glutamyl-tRNA(Asn/Gln) amidotransferase subunit B">
    <location>
        <begin position="1"/>
        <end position="479"/>
    </location>
</feature>
<evidence type="ECO:0000255" key="1">
    <source>
        <dbReference type="HAMAP-Rule" id="MF_00121"/>
    </source>
</evidence>
<comment type="function">
    <text evidence="1">Allows the formation of correctly charged Asn-tRNA(Asn) or Gln-tRNA(Gln) through the transamidation of misacylated Asp-tRNA(Asn) or Glu-tRNA(Gln) in organisms which lack either or both of asparaginyl-tRNA or glutaminyl-tRNA synthetases. The reaction takes place in the presence of glutamine and ATP through an activated phospho-Asp-tRNA(Asn) or phospho-Glu-tRNA(Gln).</text>
</comment>
<comment type="catalytic activity">
    <reaction evidence="1">
        <text>L-glutamyl-tRNA(Gln) + L-glutamine + ATP + H2O = L-glutaminyl-tRNA(Gln) + L-glutamate + ADP + phosphate + H(+)</text>
        <dbReference type="Rhea" id="RHEA:17521"/>
        <dbReference type="Rhea" id="RHEA-COMP:9681"/>
        <dbReference type="Rhea" id="RHEA-COMP:9684"/>
        <dbReference type="ChEBI" id="CHEBI:15377"/>
        <dbReference type="ChEBI" id="CHEBI:15378"/>
        <dbReference type="ChEBI" id="CHEBI:29985"/>
        <dbReference type="ChEBI" id="CHEBI:30616"/>
        <dbReference type="ChEBI" id="CHEBI:43474"/>
        <dbReference type="ChEBI" id="CHEBI:58359"/>
        <dbReference type="ChEBI" id="CHEBI:78520"/>
        <dbReference type="ChEBI" id="CHEBI:78521"/>
        <dbReference type="ChEBI" id="CHEBI:456216"/>
    </reaction>
</comment>
<comment type="catalytic activity">
    <reaction evidence="1">
        <text>L-aspartyl-tRNA(Asn) + L-glutamine + ATP + H2O = L-asparaginyl-tRNA(Asn) + L-glutamate + ADP + phosphate + 2 H(+)</text>
        <dbReference type="Rhea" id="RHEA:14513"/>
        <dbReference type="Rhea" id="RHEA-COMP:9674"/>
        <dbReference type="Rhea" id="RHEA-COMP:9677"/>
        <dbReference type="ChEBI" id="CHEBI:15377"/>
        <dbReference type="ChEBI" id="CHEBI:15378"/>
        <dbReference type="ChEBI" id="CHEBI:29985"/>
        <dbReference type="ChEBI" id="CHEBI:30616"/>
        <dbReference type="ChEBI" id="CHEBI:43474"/>
        <dbReference type="ChEBI" id="CHEBI:58359"/>
        <dbReference type="ChEBI" id="CHEBI:78515"/>
        <dbReference type="ChEBI" id="CHEBI:78516"/>
        <dbReference type="ChEBI" id="CHEBI:456216"/>
    </reaction>
</comment>
<comment type="subunit">
    <text evidence="1">Heterotrimer of A, B and C subunits.</text>
</comment>
<comment type="similarity">
    <text evidence="1">Belongs to the GatB/GatE family. GatB subfamily.</text>
</comment>
<accession>Q5XAC8</accession>